<gene>
    <name evidence="1" type="primary">rplC</name>
    <name type="ordered locus">SSA_0107</name>
</gene>
<reference key="1">
    <citation type="journal article" date="2007" name="J. Bacteriol.">
        <title>Genome of the opportunistic pathogen Streptococcus sanguinis.</title>
        <authorList>
            <person name="Xu P."/>
            <person name="Alves J.M."/>
            <person name="Kitten T."/>
            <person name="Brown A."/>
            <person name="Chen Z."/>
            <person name="Ozaki L.S."/>
            <person name="Manque P."/>
            <person name="Ge X."/>
            <person name="Serrano M.G."/>
            <person name="Puiu D."/>
            <person name="Hendricks S."/>
            <person name="Wang Y."/>
            <person name="Chaplin M.D."/>
            <person name="Akan D."/>
            <person name="Paik S."/>
            <person name="Peterson D.L."/>
            <person name="Macrina F.L."/>
            <person name="Buck G.A."/>
        </authorList>
    </citation>
    <scope>NUCLEOTIDE SEQUENCE [LARGE SCALE GENOMIC DNA]</scope>
    <source>
        <strain>SK36</strain>
    </source>
</reference>
<sequence length="208" mass="22261">MTKGILGKKVGMTQIFTEAGELIPVTVVEAAPNVVLQVKTVETDGYNAVQVGFDDLRDVLSNKPAKGHVAKANTAPKRFIREFKNIEGLEVGAEITVDTFEAGDVVDVTGTSKGKGFQGVIKRHGQSRGPMAHGSRYHRRPGSMGPVAPNRVFKNKRLAGRMGGNRVTIQNLEIVQVVPEKNVILIKGNVPGAKKSLITIKSAVKAGK</sequence>
<proteinExistence type="inferred from homology"/>
<comment type="function">
    <text evidence="1">One of the primary rRNA binding proteins, it binds directly near the 3'-end of the 23S rRNA, where it nucleates assembly of the 50S subunit.</text>
</comment>
<comment type="subunit">
    <text evidence="1">Part of the 50S ribosomal subunit. Forms a cluster with proteins L14 and L19.</text>
</comment>
<comment type="similarity">
    <text evidence="1">Belongs to the universal ribosomal protein uL3 family.</text>
</comment>
<evidence type="ECO:0000255" key="1">
    <source>
        <dbReference type="HAMAP-Rule" id="MF_01325"/>
    </source>
</evidence>
<evidence type="ECO:0000256" key="2">
    <source>
        <dbReference type="SAM" id="MobiDB-lite"/>
    </source>
</evidence>
<evidence type="ECO:0000305" key="3"/>
<name>RL3_STRSV</name>
<accession>A3CK63</accession>
<feature type="chain" id="PRO_1000052155" description="Large ribosomal subunit protein uL3">
    <location>
        <begin position="1"/>
        <end position="208"/>
    </location>
</feature>
<feature type="region of interest" description="Disordered" evidence="2">
    <location>
        <begin position="123"/>
        <end position="147"/>
    </location>
</feature>
<dbReference type="EMBL" id="CP000387">
    <property type="protein sequence ID" value="ABN43568.1"/>
    <property type="molecule type" value="Genomic_DNA"/>
</dbReference>
<dbReference type="RefSeq" id="WP_002894479.1">
    <property type="nucleotide sequence ID" value="NZ_CAXTYR010000005.1"/>
</dbReference>
<dbReference type="RefSeq" id="YP_001034118.1">
    <property type="nucleotide sequence ID" value="NC_009009.1"/>
</dbReference>
<dbReference type="SMR" id="A3CK63"/>
<dbReference type="STRING" id="388919.SSA_0107"/>
<dbReference type="GeneID" id="48426585"/>
<dbReference type="KEGG" id="ssa:SSA_0107"/>
<dbReference type="PATRIC" id="fig|388919.9.peg.100"/>
<dbReference type="eggNOG" id="COG0087">
    <property type="taxonomic scope" value="Bacteria"/>
</dbReference>
<dbReference type="HOGENOM" id="CLU_044142_4_1_9"/>
<dbReference type="OrthoDB" id="9806135at2"/>
<dbReference type="Proteomes" id="UP000002148">
    <property type="component" value="Chromosome"/>
</dbReference>
<dbReference type="GO" id="GO:0022625">
    <property type="term" value="C:cytosolic large ribosomal subunit"/>
    <property type="evidence" value="ECO:0007669"/>
    <property type="project" value="TreeGrafter"/>
</dbReference>
<dbReference type="GO" id="GO:0019843">
    <property type="term" value="F:rRNA binding"/>
    <property type="evidence" value="ECO:0007669"/>
    <property type="project" value="UniProtKB-UniRule"/>
</dbReference>
<dbReference type="GO" id="GO:0003735">
    <property type="term" value="F:structural constituent of ribosome"/>
    <property type="evidence" value="ECO:0007669"/>
    <property type="project" value="InterPro"/>
</dbReference>
<dbReference type="GO" id="GO:0006412">
    <property type="term" value="P:translation"/>
    <property type="evidence" value="ECO:0007669"/>
    <property type="project" value="UniProtKB-UniRule"/>
</dbReference>
<dbReference type="FunFam" id="2.40.30.10:FF:000004">
    <property type="entry name" value="50S ribosomal protein L3"/>
    <property type="match status" value="1"/>
</dbReference>
<dbReference type="FunFam" id="3.30.160.810:FF:000002">
    <property type="entry name" value="50S ribosomal protein L3"/>
    <property type="match status" value="1"/>
</dbReference>
<dbReference type="Gene3D" id="3.30.160.810">
    <property type="match status" value="1"/>
</dbReference>
<dbReference type="Gene3D" id="2.40.30.10">
    <property type="entry name" value="Translation factors"/>
    <property type="match status" value="1"/>
</dbReference>
<dbReference type="HAMAP" id="MF_01325_B">
    <property type="entry name" value="Ribosomal_uL3_B"/>
    <property type="match status" value="1"/>
</dbReference>
<dbReference type="InterPro" id="IPR000597">
    <property type="entry name" value="Ribosomal_uL3"/>
</dbReference>
<dbReference type="InterPro" id="IPR019927">
    <property type="entry name" value="Ribosomal_uL3_bac/org-type"/>
</dbReference>
<dbReference type="InterPro" id="IPR019926">
    <property type="entry name" value="Ribosomal_uL3_CS"/>
</dbReference>
<dbReference type="InterPro" id="IPR009000">
    <property type="entry name" value="Transl_B-barrel_sf"/>
</dbReference>
<dbReference type="NCBIfam" id="TIGR03625">
    <property type="entry name" value="L3_bact"/>
    <property type="match status" value="1"/>
</dbReference>
<dbReference type="PANTHER" id="PTHR11229">
    <property type="entry name" value="50S RIBOSOMAL PROTEIN L3"/>
    <property type="match status" value="1"/>
</dbReference>
<dbReference type="PANTHER" id="PTHR11229:SF16">
    <property type="entry name" value="LARGE RIBOSOMAL SUBUNIT PROTEIN UL3C"/>
    <property type="match status" value="1"/>
</dbReference>
<dbReference type="Pfam" id="PF00297">
    <property type="entry name" value="Ribosomal_L3"/>
    <property type="match status" value="1"/>
</dbReference>
<dbReference type="SUPFAM" id="SSF50447">
    <property type="entry name" value="Translation proteins"/>
    <property type="match status" value="1"/>
</dbReference>
<dbReference type="PROSITE" id="PS00474">
    <property type="entry name" value="RIBOSOMAL_L3"/>
    <property type="match status" value="1"/>
</dbReference>
<protein>
    <recommendedName>
        <fullName evidence="1">Large ribosomal subunit protein uL3</fullName>
    </recommendedName>
    <alternativeName>
        <fullName evidence="3">50S ribosomal protein L3</fullName>
    </alternativeName>
</protein>
<keyword id="KW-1185">Reference proteome</keyword>
<keyword id="KW-0687">Ribonucleoprotein</keyword>
<keyword id="KW-0689">Ribosomal protein</keyword>
<keyword id="KW-0694">RNA-binding</keyword>
<keyword id="KW-0699">rRNA-binding</keyword>
<organism>
    <name type="scientific">Streptococcus sanguinis (strain SK36)</name>
    <dbReference type="NCBI Taxonomy" id="388919"/>
    <lineage>
        <taxon>Bacteria</taxon>
        <taxon>Bacillati</taxon>
        <taxon>Bacillota</taxon>
        <taxon>Bacilli</taxon>
        <taxon>Lactobacillales</taxon>
        <taxon>Streptococcaceae</taxon>
        <taxon>Streptococcus</taxon>
    </lineage>
</organism>